<dbReference type="EMBL" id="AE001273">
    <property type="protein sequence ID" value="AAC67909.1"/>
    <property type="molecule type" value="Genomic_DNA"/>
</dbReference>
<dbReference type="PIR" id="A71530">
    <property type="entry name" value="A71530"/>
</dbReference>
<dbReference type="RefSeq" id="NP_219821.1">
    <property type="nucleotide sequence ID" value="NC_000117.1"/>
</dbReference>
<dbReference type="RefSeq" id="WP_009872553.1">
    <property type="nucleotide sequence ID" value="NC_000117.1"/>
</dbReference>
<dbReference type="SMR" id="O84318"/>
<dbReference type="FunCoup" id="O84318">
    <property type="interactions" value="272"/>
</dbReference>
<dbReference type="STRING" id="272561.CT_316"/>
<dbReference type="EnsemblBacteria" id="AAC67909">
    <property type="protein sequence ID" value="AAC67909"/>
    <property type="gene ID" value="CT_316"/>
</dbReference>
<dbReference type="GeneID" id="884807"/>
<dbReference type="KEGG" id="ctr:CT_316"/>
<dbReference type="PATRIC" id="fig|272561.5.peg.338"/>
<dbReference type="HOGENOM" id="CLU_086499_3_0_0"/>
<dbReference type="InParanoid" id="O84318"/>
<dbReference type="OrthoDB" id="9811748at2"/>
<dbReference type="Proteomes" id="UP000000431">
    <property type="component" value="Chromosome"/>
</dbReference>
<dbReference type="GO" id="GO:0022625">
    <property type="term" value="C:cytosolic large ribosomal subunit"/>
    <property type="evidence" value="ECO:0000318"/>
    <property type="project" value="GO_Central"/>
</dbReference>
<dbReference type="GO" id="GO:0003729">
    <property type="term" value="F:mRNA binding"/>
    <property type="evidence" value="ECO:0000318"/>
    <property type="project" value="GO_Central"/>
</dbReference>
<dbReference type="GO" id="GO:0003735">
    <property type="term" value="F:structural constituent of ribosome"/>
    <property type="evidence" value="ECO:0000318"/>
    <property type="project" value="GO_Central"/>
</dbReference>
<dbReference type="GO" id="GO:0006412">
    <property type="term" value="P:translation"/>
    <property type="evidence" value="ECO:0000318"/>
    <property type="project" value="GO_Central"/>
</dbReference>
<dbReference type="CDD" id="cd00387">
    <property type="entry name" value="Ribosomal_L7_L12"/>
    <property type="match status" value="1"/>
</dbReference>
<dbReference type="FunFam" id="1.20.5.710:FF:000007">
    <property type="entry name" value="50S ribosomal protein L7/L12"/>
    <property type="match status" value="1"/>
</dbReference>
<dbReference type="FunFam" id="3.30.1390.10:FF:000001">
    <property type="entry name" value="50S ribosomal protein L7/L12"/>
    <property type="match status" value="1"/>
</dbReference>
<dbReference type="Gene3D" id="3.30.1390.10">
    <property type="match status" value="1"/>
</dbReference>
<dbReference type="Gene3D" id="1.20.5.710">
    <property type="entry name" value="Single helix bin"/>
    <property type="match status" value="1"/>
</dbReference>
<dbReference type="HAMAP" id="MF_00368">
    <property type="entry name" value="Ribosomal_bL12"/>
    <property type="match status" value="1"/>
</dbReference>
<dbReference type="InterPro" id="IPR000206">
    <property type="entry name" value="Ribosomal_bL12"/>
</dbReference>
<dbReference type="InterPro" id="IPR013823">
    <property type="entry name" value="Ribosomal_bL12_C"/>
</dbReference>
<dbReference type="InterPro" id="IPR014719">
    <property type="entry name" value="Ribosomal_bL12_C/ClpS-like"/>
</dbReference>
<dbReference type="InterPro" id="IPR008932">
    <property type="entry name" value="Ribosomal_bL12_oligo"/>
</dbReference>
<dbReference type="InterPro" id="IPR036235">
    <property type="entry name" value="Ribosomal_bL12_oligo_N_sf"/>
</dbReference>
<dbReference type="NCBIfam" id="TIGR00855">
    <property type="entry name" value="L12"/>
    <property type="match status" value="1"/>
</dbReference>
<dbReference type="PANTHER" id="PTHR45987">
    <property type="entry name" value="39S RIBOSOMAL PROTEIN L12"/>
    <property type="match status" value="1"/>
</dbReference>
<dbReference type="PANTHER" id="PTHR45987:SF4">
    <property type="entry name" value="LARGE RIBOSOMAL SUBUNIT PROTEIN BL12M"/>
    <property type="match status" value="1"/>
</dbReference>
<dbReference type="Pfam" id="PF00542">
    <property type="entry name" value="Ribosomal_L12"/>
    <property type="match status" value="1"/>
</dbReference>
<dbReference type="Pfam" id="PF16320">
    <property type="entry name" value="Ribosomal_L12_N"/>
    <property type="match status" value="1"/>
</dbReference>
<dbReference type="SUPFAM" id="SSF54736">
    <property type="entry name" value="ClpS-like"/>
    <property type="match status" value="1"/>
</dbReference>
<dbReference type="SUPFAM" id="SSF48300">
    <property type="entry name" value="Ribosomal protein L7/12, oligomerisation (N-terminal) domain"/>
    <property type="match status" value="1"/>
</dbReference>
<gene>
    <name evidence="2" type="primary">rplL</name>
    <name type="synonym">rl7</name>
    <name type="ordered locus">CT_316</name>
</gene>
<sequence>MTTESLETLVEQLSGLTVLELSQLKKLLEEKWDVTAAAPVVAVAGAAAAGDAPASAEPTEFAVILEDVPSDKKIGVLKVVREVTGLALKEAKEMTEGLPKTVKEKTSKSDAEDTVKKLQEAGAKAVAKGL</sequence>
<keyword id="KW-1185">Reference proteome</keyword>
<keyword id="KW-0687">Ribonucleoprotein</keyword>
<keyword id="KW-0689">Ribosomal protein</keyword>
<feature type="initiator methionine" description="Removed" evidence="1">
    <location>
        <position position="1"/>
    </location>
</feature>
<feature type="chain" id="PRO_0000157520" description="Large ribosomal subunit protein bL12">
    <location>
        <begin position="2"/>
        <end position="130"/>
    </location>
</feature>
<organism>
    <name type="scientific">Chlamydia trachomatis serovar D (strain ATCC VR-885 / DSM 19411 / UW-3/Cx)</name>
    <dbReference type="NCBI Taxonomy" id="272561"/>
    <lineage>
        <taxon>Bacteria</taxon>
        <taxon>Pseudomonadati</taxon>
        <taxon>Chlamydiota</taxon>
        <taxon>Chlamydiia</taxon>
        <taxon>Chlamydiales</taxon>
        <taxon>Chlamydiaceae</taxon>
        <taxon>Chlamydia/Chlamydophila group</taxon>
        <taxon>Chlamydia</taxon>
    </lineage>
</organism>
<evidence type="ECO:0000250" key="1"/>
<evidence type="ECO:0000255" key="2">
    <source>
        <dbReference type="HAMAP-Rule" id="MF_00368"/>
    </source>
</evidence>
<evidence type="ECO:0000305" key="3"/>
<proteinExistence type="inferred from homology"/>
<accession>O84318</accession>
<reference key="1">
    <citation type="journal article" date="1998" name="Science">
        <title>Genome sequence of an obligate intracellular pathogen of humans: Chlamydia trachomatis.</title>
        <authorList>
            <person name="Stephens R.S."/>
            <person name="Kalman S."/>
            <person name="Lammel C.J."/>
            <person name="Fan J."/>
            <person name="Marathe R."/>
            <person name="Aravind L."/>
            <person name="Mitchell W.P."/>
            <person name="Olinger L."/>
            <person name="Tatusov R.L."/>
            <person name="Zhao Q."/>
            <person name="Koonin E.V."/>
            <person name="Davis R.W."/>
        </authorList>
    </citation>
    <scope>NUCLEOTIDE SEQUENCE [LARGE SCALE GENOMIC DNA]</scope>
    <source>
        <strain>ATCC VR-885 / DSM 19411 / UW-3/Cx</strain>
    </source>
</reference>
<name>RL7_CHLTR</name>
<protein>
    <recommendedName>
        <fullName evidence="2">Large ribosomal subunit protein bL12</fullName>
    </recommendedName>
    <alternativeName>
        <fullName evidence="3">50S ribosomal protein L7/L12</fullName>
    </alternativeName>
</protein>
<comment type="function">
    <text evidence="2">Forms part of the ribosomal stalk which helps the ribosome interact with GTP-bound translation factors. Is thus essential for accurate translation.</text>
</comment>
<comment type="subunit">
    <text evidence="2">Homodimer. Part of the ribosomal stalk of the 50S ribosomal subunit. Forms a multimeric L10(L12)X complex, where L10 forms an elongated spine to which 2 to 4 L12 dimers bind in a sequential fashion. Binds GTP-bound translation factors.</text>
</comment>
<comment type="similarity">
    <text evidence="2">Belongs to the bacterial ribosomal protein bL12 family.</text>
</comment>